<proteinExistence type="evidence at transcript level"/>
<protein>
    <recommendedName>
        <fullName>Pentatricopeptide repeat-containing protein At4g21065</fullName>
    </recommendedName>
</protein>
<sequence length="595" mass="67101">MSPFSETSVLLLPMVEKCINLLQTYGVSSITKLRQIHAFSIRHGVSISDAELGKHLIFYLVSLPSPPPMSYAHKVFSKIEKPINVFIWNTLIRGYAEIGNSISAFSLYREMRVSGLVEPDTHTYPFLIKAVTTMADVRLGETIHSVVIRSGFGSLIYVQNSLLHLYANCGDVASAYKVFDKMPEKDLVAWNSVINGFAENGKPEEALALYTEMNSKGIKPDGFTIVSLLSACAKIGALTLGKRVHVYMIKVGLTRNLHSSNVLLDLYARCGRVEEAKTLFDEMVDKNSVSWTSLIVGLAVNGFGKEAIELFKYMESTEGLLPCEITFVGILYACSHCGMVKEGFEYFRRMREEYKIEPRIEHFGCMVDLLARAGQVKKAYEYIKSMPMQPNVVIWRTLLGACTVHGDSDLAEFARIQILQLEPNHSGDYVLLSNMYASEQRWSDVQKIRKQMLRDGVKKVPGHSLVEVGNRVHEFLMGDKSHPQSDAIYAKLKEMTGRLRSEGYVPQISNVYVDVEEEEKENAVVYHSEKIAIAFMLISTPERSPITVVKNLRVCADCHLAIKLVSKVYNREIVVRDRSRFHHFKNGSCSCQDYW</sequence>
<name>PP330_ARATH</name>
<evidence type="ECO:0000303" key="1">
    <source>
    </source>
</evidence>
<evidence type="ECO:0000305" key="2"/>
<accession>A8MQA3</accession>
<accession>Q9SUA7</accession>
<keyword id="KW-0025">Alternative splicing</keyword>
<keyword id="KW-1185">Reference proteome</keyword>
<keyword id="KW-0677">Repeat</keyword>
<organism>
    <name type="scientific">Arabidopsis thaliana</name>
    <name type="common">Mouse-ear cress</name>
    <dbReference type="NCBI Taxonomy" id="3702"/>
    <lineage>
        <taxon>Eukaryota</taxon>
        <taxon>Viridiplantae</taxon>
        <taxon>Streptophyta</taxon>
        <taxon>Embryophyta</taxon>
        <taxon>Tracheophyta</taxon>
        <taxon>Spermatophyta</taxon>
        <taxon>Magnoliopsida</taxon>
        <taxon>eudicotyledons</taxon>
        <taxon>Gunneridae</taxon>
        <taxon>Pentapetalae</taxon>
        <taxon>rosids</taxon>
        <taxon>malvids</taxon>
        <taxon>Brassicales</taxon>
        <taxon>Brassicaceae</taxon>
        <taxon>Camelineae</taxon>
        <taxon>Arabidopsis</taxon>
    </lineage>
</organism>
<reference key="1">
    <citation type="journal article" date="1999" name="Nature">
        <title>Sequence and analysis of chromosome 4 of the plant Arabidopsis thaliana.</title>
        <authorList>
            <person name="Mayer K.F.X."/>
            <person name="Schueller C."/>
            <person name="Wambutt R."/>
            <person name="Murphy G."/>
            <person name="Volckaert G."/>
            <person name="Pohl T."/>
            <person name="Duesterhoeft A."/>
            <person name="Stiekema W."/>
            <person name="Entian K.-D."/>
            <person name="Terryn N."/>
            <person name="Harris B."/>
            <person name="Ansorge W."/>
            <person name="Brandt P."/>
            <person name="Grivell L.A."/>
            <person name="Rieger M."/>
            <person name="Weichselgartner M."/>
            <person name="de Simone V."/>
            <person name="Obermaier B."/>
            <person name="Mache R."/>
            <person name="Mueller M."/>
            <person name="Kreis M."/>
            <person name="Delseny M."/>
            <person name="Puigdomenech P."/>
            <person name="Watson M."/>
            <person name="Schmidtheini T."/>
            <person name="Reichert B."/>
            <person name="Portetelle D."/>
            <person name="Perez-Alonso M."/>
            <person name="Boutry M."/>
            <person name="Bancroft I."/>
            <person name="Vos P."/>
            <person name="Hoheisel J."/>
            <person name="Zimmermann W."/>
            <person name="Wedler H."/>
            <person name="Ridley P."/>
            <person name="Langham S.-A."/>
            <person name="McCullagh B."/>
            <person name="Bilham L."/>
            <person name="Robben J."/>
            <person name="van der Schueren J."/>
            <person name="Grymonprez B."/>
            <person name="Chuang Y.-J."/>
            <person name="Vandenbussche F."/>
            <person name="Braeken M."/>
            <person name="Weltjens I."/>
            <person name="Voet M."/>
            <person name="Bastiaens I."/>
            <person name="Aert R."/>
            <person name="Defoor E."/>
            <person name="Weitzenegger T."/>
            <person name="Bothe G."/>
            <person name="Ramsperger U."/>
            <person name="Hilbert H."/>
            <person name="Braun M."/>
            <person name="Holzer E."/>
            <person name="Brandt A."/>
            <person name="Peters S."/>
            <person name="van Staveren M."/>
            <person name="Dirkse W."/>
            <person name="Mooijman P."/>
            <person name="Klein Lankhorst R."/>
            <person name="Rose M."/>
            <person name="Hauf J."/>
            <person name="Koetter P."/>
            <person name="Berneiser S."/>
            <person name="Hempel S."/>
            <person name="Feldpausch M."/>
            <person name="Lamberth S."/>
            <person name="Van den Daele H."/>
            <person name="De Keyser A."/>
            <person name="Buysshaert C."/>
            <person name="Gielen J."/>
            <person name="Villarroel R."/>
            <person name="De Clercq R."/>
            <person name="van Montagu M."/>
            <person name="Rogers J."/>
            <person name="Cronin A."/>
            <person name="Quail M.A."/>
            <person name="Bray-Allen S."/>
            <person name="Clark L."/>
            <person name="Doggett J."/>
            <person name="Hall S."/>
            <person name="Kay M."/>
            <person name="Lennard N."/>
            <person name="McLay K."/>
            <person name="Mayes R."/>
            <person name="Pettett A."/>
            <person name="Rajandream M.A."/>
            <person name="Lyne M."/>
            <person name="Benes V."/>
            <person name="Rechmann S."/>
            <person name="Borkova D."/>
            <person name="Bloecker H."/>
            <person name="Scharfe M."/>
            <person name="Grimm M."/>
            <person name="Loehnert T.-H."/>
            <person name="Dose S."/>
            <person name="de Haan M."/>
            <person name="Maarse A.C."/>
            <person name="Schaefer M."/>
            <person name="Mueller-Auer S."/>
            <person name="Gabel C."/>
            <person name="Fuchs M."/>
            <person name="Fartmann B."/>
            <person name="Granderath K."/>
            <person name="Dauner D."/>
            <person name="Herzl A."/>
            <person name="Neumann S."/>
            <person name="Argiriou A."/>
            <person name="Vitale D."/>
            <person name="Liguori R."/>
            <person name="Piravandi E."/>
            <person name="Massenet O."/>
            <person name="Quigley F."/>
            <person name="Clabauld G."/>
            <person name="Muendlein A."/>
            <person name="Felber R."/>
            <person name="Schnabl S."/>
            <person name="Hiller R."/>
            <person name="Schmidt W."/>
            <person name="Lecharny A."/>
            <person name="Aubourg S."/>
            <person name="Chefdor F."/>
            <person name="Cooke R."/>
            <person name="Berger C."/>
            <person name="Monfort A."/>
            <person name="Casacuberta E."/>
            <person name="Gibbons T."/>
            <person name="Weber N."/>
            <person name="Vandenbol M."/>
            <person name="Bargues M."/>
            <person name="Terol J."/>
            <person name="Torres A."/>
            <person name="Perez-Perez A."/>
            <person name="Purnelle B."/>
            <person name="Bent E."/>
            <person name="Johnson S."/>
            <person name="Tacon D."/>
            <person name="Jesse T."/>
            <person name="Heijnen L."/>
            <person name="Schwarz S."/>
            <person name="Scholler P."/>
            <person name="Heber S."/>
            <person name="Francs P."/>
            <person name="Bielke C."/>
            <person name="Frishman D."/>
            <person name="Haase D."/>
            <person name="Lemcke K."/>
            <person name="Mewes H.-W."/>
            <person name="Stocker S."/>
            <person name="Zaccaria P."/>
            <person name="Bevan M."/>
            <person name="Wilson R.K."/>
            <person name="de la Bastide M."/>
            <person name="Habermann K."/>
            <person name="Parnell L."/>
            <person name="Dedhia N."/>
            <person name="Gnoj L."/>
            <person name="Schutz K."/>
            <person name="Huang E."/>
            <person name="Spiegel L."/>
            <person name="Sekhon M."/>
            <person name="Murray J."/>
            <person name="Sheet P."/>
            <person name="Cordes M."/>
            <person name="Abu-Threideh J."/>
            <person name="Stoneking T."/>
            <person name="Kalicki J."/>
            <person name="Graves T."/>
            <person name="Harmon G."/>
            <person name="Edwards J."/>
            <person name="Latreille P."/>
            <person name="Courtney L."/>
            <person name="Cloud J."/>
            <person name="Abbott A."/>
            <person name="Scott K."/>
            <person name="Johnson D."/>
            <person name="Minx P."/>
            <person name="Bentley D."/>
            <person name="Fulton B."/>
            <person name="Miller N."/>
            <person name="Greco T."/>
            <person name="Kemp K."/>
            <person name="Kramer J."/>
            <person name="Fulton L."/>
            <person name="Mardis E."/>
            <person name="Dante M."/>
            <person name="Pepin K."/>
            <person name="Hillier L.W."/>
            <person name="Nelson J."/>
            <person name="Spieth J."/>
            <person name="Ryan E."/>
            <person name="Andrews S."/>
            <person name="Geisel C."/>
            <person name="Layman D."/>
            <person name="Du H."/>
            <person name="Ali J."/>
            <person name="Berghoff A."/>
            <person name="Jones K."/>
            <person name="Drone K."/>
            <person name="Cotton M."/>
            <person name="Joshu C."/>
            <person name="Antonoiu B."/>
            <person name="Zidanic M."/>
            <person name="Strong C."/>
            <person name="Sun H."/>
            <person name="Lamar B."/>
            <person name="Yordan C."/>
            <person name="Ma P."/>
            <person name="Zhong J."/>
            <person name="Preston R."/>
            <person name="Vil D."/>
            <person name="Shekher M."/>
            <person name="Matero A."/>
            <person name="Shah R."/>
            <person name="Swaby I.K."/>
            <person name="O'Shaughnessy A."/>
            <person name="Rodriguez M."/>
            <person name="Hoffman J."/>
            <person name="Till S."/>
            <person name="Granat S."/>
            <person name="Shohdy N."/>
            <person name="Hasegawa A."/>
            <person name="Hameed A."/>
            <person name="Lodhi M."/>
            <person name="Johnson A."/>
            <person name="Chen E."/>
            <person name="Marra M.A."/>
            <person name="Martienssen R."/>
            <person name="McCombie W.R."/>
        </authorList>
    </citation>
    <scope>NUCLEOTIDE SEQUENCE [LARGE SCALE GENOMIC DNA]</scope>
    <source>
        <strain>cv. Columbia</strain>
    </source>
</reference>
<reference key="2">
    <citation type="journal article" date="2017" name="Plant J.">
        <title>Araport11: a complete reannotation of the Arabidopsis thaliana reference genome.</title>
        <authorList>
            <person name="Cheng C.Y."/>
            <person name="Krishnakumar V."/>
            <person name="Chan A.P."/>
            <person name="Thibaud-Nissen F."/>
            <person name="Schobel S."/>
            <person name="Town C.D."/>
        </authorList>
    </citation>
    <scope>GENOME REANNOTATION</scope>
    <source>
        <strain>cv. Columbia</strain>
    </source>
</reference>
<reference key="3">
    <citation type="journal article" date="2004" name="Genome Res.">
        <title>Whole genome sequence comparisons and 'full-length' cDNA sequences: a combined approach to evaluate and improve Arabidopsis genome annotation.</title>
        <authorList>
            <person name="Castelli V."/>
            <person name="Aury J.-M."/>
            <person name="Jaillon O."/>
            <person name="Wincker P."/>
            <person name="Clepet C."/>
            <person name="Menard M."/>
            <person name="Cruaud C."/>
            <person name="Quetier F."/>
            <person name="Scarpelli C."/>
            <person name="Schaechter V."/>
            <person name="Temple G."/>
            <person name="Caboche M."/>
            <person name="Weissenbach J."/>
            <person name="Salanoubat M."/>
        </authorList>
    </citation>
    <scope>NUCLEOTIDE SEQUENCE [LARGE SCALE MRNA] (ISOFORMS 1 AND 2)</scope>
    <source>
        <strain>cv. Columbia</strain>
    </source>
</reference>
<reference key="4">
    <citation type="journal article" date="2000" name="Plant Mol. Biol.">
        <title>In Arabidopsis thaliana, 1% of the genome codes for a novel protein family unique to plants.</title>
        <authorList>
            <person name="Aubourg S."/>
            <person name="Boudet N."/>
            <person name="Kreis M."/>
            <person name="Lecharny A."/>
        </authorList>
    </citation>
    <scope>GENE FAMILY</scope>
</reference>
<reference key="5">
    <citation type="journal article" date="2004" name="Plant Cell">
        <title>Genome-wide analysis of Arabidopsis pentatricopeptide repeat proteins reveals their essential role in organelle biogenesis.</title>
        <authorList>
            <person name="Lurin C."/>
            <person name="Andres C."/>
            <person name="Aubourg S."/>
            <person name="Bellaoui M."/>
            <person name="Bitton F."/>
            <person name="Bruyere C."/>
            <person name="Caboche M."/>
            <person name="Debast C."/>
            <person name="Gualberto J."/>
            <person name="Hoffmann B."/>
            <person name="Lecharny A."/>
            <person name="Le Ret M."/>
            <person name="Martin-Magniette M.-L."/>
            <person name="Mireau H."/>
            <person name="Peeters N."/>
            <person name="Renou J.-P."/>
            <person name="Szurek B."/>
            <person name="Taconnat L."/>
            <person name="Small I."/>
        </authorList>
    </citation>
    <scope>GENE FAMILY</scope>
</reference>
<gene>
    <name type="primary">PCMP-H28</name>
    <name type="ordered locus">At4g21065</name>
    <name type="ORF">T13K14.230</name>
</gene>
<dbReference type="EMBL" id="AL080282">
    <property type="protein sequence ID" value="CAB45902.1"/>
    <property type="status" value="ALT_SEQ"/>
    <property type="molecule type" value="Genomic_DNA"/>
</dbReference>
<dbReference type="EMBL" id="AL161554">
    <property type="protein sequence ID" value="CAB79107.1"/>
    <property type="status" value="ALT_SEQ"/>
    <property type="molecule type" value="Genomic_DNA"/>
</dbReference>
<dbReference type="EMBL" id="CP002687">
    <property type="protein sequence ID" value="AEE84394.1"/>
    <property type="molecule type" value="Genomic_DNA"/>
</dbReference>
<dbReference type="EMBL" id="CP002687">
    <property type="protein sequence ID" value="AEE84395.1"/>
    <property type="molecule type" value="Genomic_DNA"/>
</dbReference>
<dbReference type="EMBL" id="BX826462">
    <property type="status" value="NOT_ANNOTATED_CDS"/>
    <property type="molecule type" value="mRNA"/>
</dbReference>
<dbReference type="EMBL" id="BX827021">
    <property type="status" value="NOT_ANNOTATED_CDS"/>
    <property type="molecule type" value="mRNA"/>
</dbReference>
<dbReference type="PIR" id="A85240">
    <property type="entry name" value="A85240"/>
</dbReference>
<dbReference type="PIR" id="T10649">
    <property type="entry name" value="T10649"/>
</dbReference>
<dbReference type="RefSeq" id="NP_001078414.1">
    <molecule id="A8MQA3-1"/>
    <property type="nucleotide sequence ID" value="NM_001084945.2"/>
</dbReference>
<dbReference type="RefSeq" id="NP_001078415.1">
    <molecule id="A8MQA3-2"/>
    <property type="nucleotide sequence ID" value="NM_001084946.1"/>
</dbReference>
<dbReference type="SMR" id="A8MQA3"/>
<dbReference type="FunCoup" id="A8MQA3">
    <property type="interactions" value="601"/>
</dbReference>
<dbReference type="iPTMnet" id="A8MQA3"/>
<dbReference type="PaxDb" id="3702-AT4G21065.1"/>
<dbReference type="ProteomicsDB" id="249230">
    <molecule id="A8MQA3-1"/>
</dbReference>
<dbReference type="EnsemblPlants" id="AT4G21065.1">
    <molecule id="A8MQA3-1"/>
    <property type="protein sequence ID" value="AT4G21065.1"/>
    <property type="gene ID" value="AT4G21065"/>
</dbReference>
<dbReference type="EnsemblPlants" id="AT4G21065.2">
    <molecule id="A8MQA3-2"/>
    <property type="protein sequence ID" value="AT4G21065.2"/>
    <property type="gene ID" value="AT4G21065"/>
</dbReference>
<dbReference type="GeneID" id="5008150"/>
<dbReference type="Gramene" id="AT4G21065.1">
    <molecule id="A8MQA3-1"/>
    <property type="protein sequence ID" value="AT4G21065.1"/>
    <property type="gene ID" value="AT4G21065"/>
</dbReference>
<dbReference type="Gramene" id="AT4G21065.2">
    <molecule id="A8MQA3-2"/>
    <property type="protein sequence ID" value="AT4G21065.2"/>
    <property type="gene ID" value="AT4G21065"/>
</dbReference>
<dbReference type="KEGG" id="ath:AT4G21065"/>
<dbReference type="Araport" id="AT4G21065"/>
<dbReference type="TAIR" id="AT4G21065"/>
<dbReference type="eggNOG" id="KOG4197">
    <property type="taxonomic scope" value="Eukaryota"/>
</dbReference>
<dbReference type="HOGENOM" id="CLU_002706_37_2_1"/>
<dbReference type="InParanoid" id="A8MQA3"/>
<dbReference type="OMA" id="ECLHAEA"/>
<dbReference type="PhylomeDB" id="A8MQA3"/>
<dbReference type="PRO" id="PR:A8MQA3"/>
<dbReference type="Proteomes" id="UP000006548">
    <property type="component" value="Chromosome 4"/>
</dbReference>
<dbReference type="ExpressionAtlas" id="A8MQA3">
    <property type="expression patterns" value="baseline and differential"/>
</dbReference>
<dbReference type="GO" id="GO:0003723">
    <property type="term" value="F:RNA binding"/>
    <property type="evidence" value="ECO:0007669"/>
    <property type="project" value="InterPro"/>
</dbReference>
<dbReference type="GO" id="GO:0008270">
    <property type="term" value="F:zinc ion binding"/>
    <property type="evidence" value="ECO:0007669"/>
    <property type="project" value="InterPro"/>
</dbReference>
<dbReference type="GO" id="GO:0009451">
    <property type="term" value="P:RNA modification"/>
    <property type="evidence" value="ECO:0007669"/>
    <property type="project" value="InterPro"/>
</dbReference>
<dbReference type="FunFam" id="1.25.40.10:FF:000366">
    <property type="entry name" value="Pentatricopeptide (PPR) repeat-containing protein"/>
    <property type="match status" value="1"/>
</dbReference>
<dbReference type="FunFam" id="1.25.40.10:FF:002165">
    <property type="entry name" value="Pentatricopeptide repeat-containing protein At4g21065"/>
    <property type="match status" value="1"/>
</dbReference>
<dbReference type="FunFam" id="1.25.40.10:FF:000417">
    <property type="entry name" value="Pentatricopeptide repeat-containing protein At4g38010"/>
    <property type="match status" value="1"/>
</dbReference>
<dbReference type="FunFam" id="1.25.40.10:FF:000031">
    <property type="entry name" value="Pentatricopeptide repeat-containing protein mitochondrial"/>
    <property type="match status" value="1"/>
</dbReference>
<dbReference type="Gene3D" id="1.25.40.10">
    <property type="entry name" value="Tetratricopeptide repeat domain"/>
    <property type="match status" value="4"/>
</dbReference>
<dbReference type="InterPro" id="IPR032867">
    <property type="entry name" value="DYW_dom"/>
</dbReference>
<dbReference type="InterPro" id="IPR046848">
    <property type="entry name" value="E_motif"/>
</dbReference>
<dbReference type="InterPro" id="IPR046849">
    <property type="entry name" value="Eplus_motif"/>
</dbReference>
<dbReference type="InterPro" id="IPR002885">
    <property type="entry name" value="Pentatricopeptide_rpt"/>
</dbReference>
<dbReference type="InterPro" id="IPR046960">
    <property type="entry name" value="PPR_At4g14850-like_plant"/>
</dbReference>
<dbReference type="InterPro" id="IPR011990">
    <property type="entry name" value="TPR-like_helical_dom_sf"/>
</dbReference>
<dbReference type="NCBIfam" id="TIGR00756">
    <property type="entry name" value="PPR"/>
    <property type="match status" value="5"/>
</dbReference>
<dbReference type="PANTHER" id="PTHR47926:SF507">
    <property type="entry name" value="DYW DOMAIN-CONTAINING PROTEIN"/>
    <property type="match status" value="1"/>
</dbReference>
<dbReference type="PANTHER" id="PTHR47926">
    <property type="entry name" value="PENTATRICOPEPTIDE REPEAT-CONTAINING PROTEIN"/>
    <property type="match status" value="1"/>
</dbReference>
<dbReference type="Pfam" id="PF14432">
    <property type="entry name" value="DYW_deaminase"/>
    <property type="match status" value="1"/>
</dbReference>
<dbReference type="Pfam" id="PF20431">
    <property type="entry name" value="E_motif"/>
    <property type="match status" value="1"/>
</dbReference>
<dbReference type="Pfam" id="PF20430">
    <property type="entry name" value="Eplus_motif"/>
    <property type="match status" value="1"/>
</dbReference>
<dbReference type="Pfam" id="PF01535">
    <property type="entry name" value="PPR"/>
    <property type="match status" value="4"/>
</dbReference>
<dbReference type="Pfam" id="PF13041">
    <property type="entry name" value="PPR_2"/>
    <property type="match status" value="2"/>
</dbReference>
<dbReference type="PROSITE" id="PS51375">
    <property type="entry name" value="PPR"/>
    <property type="match status" value="10"/>
</dbReference>
<comment type="alternative products">
    <event type="alternative splicing"/>
    <isoform>
        <id>A8MQA3-1</id>
        <name>1</name>
        <sequence type="displayed"/>
    </isoform>
    <isoform>
        <id>A8MQA3-2</id>
        <name>2</name>
        <sequence type="described" ref="VSP_036304"/>
    </isoform>
</comment>
<comment type="similarity">
    <text evidence="2">Belongs to the PPR family. PCMP-H subfamily.</text>
</comment>
<comment type="sequence caution" evidence="2">
    <conflict type="miscellaneous discrepancy">
        <sequence resource="EMBL" id="BX826462"/>
    </conflict>
    <text>Sequencing errors.</text>
</comment>
<comment type="sequence caution" evidence="2">
    <conflict type="miscellaneous discrepancy">
        <sequence resource="EMBL" id="BX827021"/>
    </conflict>
    <text>Sequencing errors.</text>
</comment>
<comment type="sequence caution" evidence="2">
    <conflict type="erroneous gene model prediction">
        <sequence resource="EMBL-CDS" id="CAB45902"/>
    </conflict>
    <text>The predicted gene has been split into 2 genes: At4g21065 and At4g21070.</text>
</comment>
<comment type="sequence caution" evidence="2">
    <conflict type="erroneous gene model prediction">
        <sequence resource="EMBL-CDS" id="CAB79107"/>
    </conflict>
    <text>The predicted gene has been split into 2 genes: At4g21065 and At4g21070.</text>
</comment>
<comment type="online information" name="Pentatricopeptide repeat proteins">
    <link uri="https://ppr.plantenergy.uwa.edu.au"/>
</comment>
<feature type="chain" id="PRO_0000363447" description="Pentatricopeptide repeat-containing protein At4g21065">
    <location>
        <begin position="1"/>
        <end position="595"/>
    </location>
</feature>
<feature type="repeat" description="PPR 1">
    <location>
        <begin position="84"/>
        <end position="118"/>
    </location>
</feature>
<feature type="repeat" description="PPR 2">
    <location>
        <begin position="120"/>
        <end position="154"/>
    </location>
</feature>
<feature type="repeat" description="PPR 3">
    <location>
        <begin position="155"/>
        <end position="185"/>
    </location>
</feature>
<feature type="repeat" description="PPR 4">
    <location>
        <begin position="186"/>
        <end position="220"/>
    </location>
</feature>
<feature type="repeat" description="PPR 5">
    <location>
        <begin position="221"/>
        <end position="255"/>
    </location>
</feature>
<feature type="repeat" description="PPR 6">
    <location>
        <begin position="256"/>
        <end position="290"/>
    </location>
</feature>
<feature type="repeat" description="PPR 7">
    <location>
        <begin position="291"/>
        <end position="317"/>
    </location>
</feature>
<feature type="repeat" description="PPR 8">
    <location>
        <begin position="323"/>
        <end position="353"/>
    </location>
</feature>
<feature type="repeat" description="PPR 9">
    <location>
        <begin position="359"/>
        <end position="389"/>
    </location>
</feature>
<feature type="region of interest" description="Type E motif">
    <location>
        <begin position="394"/>
        <end position="469"/>
    </location>
</feature>
<feature type="region of interest" description="Type E(+) motif">
    <location>
        <begin position="470"/>
        <end position="500"/>
    </location>
</feature>
<feature type="region of interest" description="Type DYW motif">
    <location>
        <begin position="501"/>
        <end position="595"/>
    </location>
</feature>
<feature type="splice variant" id="VSP_036304" description="In isoform 2." evidence="1">
    <location>
        <begin position="1"/>
        <end position="133"/>
    </location>
</feature>